<reference key="1">
    <citation type="submission" date="2004-07" db="EMBL/GenBank/DDBJ databases">
        <authorList>
            <consortium name="NIH - Xenopus Gene Collection (XGC) project"/>
        </authorList>
    </citation>
    <scope>NUCLEOTIDE SEQUENCE [LARGE SCALE MRNA]</scope>
    <source>
        <tissue>Embryo</tissue>
    </source>
</reference>
<accession>Q6DFT6</accession>
<protein>
    <recommendedName>
        <fullName>Serine palmitoyltransferase small subunit A</fullName>
    </recommendedName>
    <alternativeName>
        <fullName>Small subunit of serine palmitoyltransferase A</fullName>
        <shortName>ssSPTa</shortName>
    </alternativeName>
</protein>
<organism>
    <name type="scientific">Xenopus tropicalis</name>
    <name type="common">Western clawed frog</name>
    <name type="synonym">Silurana tropicalis</name>
    <dbReference type="NCBI Taxonomy" id="8364"/>
    <lineage>
        <taxon>Eukaryota</taxon>
        <taxon>Metazoa</taxon>
        <taxon>Chordata</taxon>
        <taxon>Craniata</taxon>
        <taxon>Vertebrata</taxon>
        <taxon>Euteleostomi</taxon>
        <taxon>Amphibia</taxon>
        <taxon>Batrachia</taxon>
        <taxon>Anura</taxon>
        <taxon>Pipoidea</taxon>
        <taxon>Pipidae</taxon>
        <taxon>Xenopodinae</taxon>
        <taxon>Xenopus</taxon>
        <taxon>Silurana</taxon>
    </lineage>
</organism>
<gene>
    <name type="primary">sptssa</name>
    <name type="synonym">ssspta</name>
</gene>
<name>SPTSA_XENTR</name>
<dbReference type="EMBL" id="BC076647">
    <property type="protein sequence ID" value="AAH76647.1"/>
    <property type="molecule type" value="mRNA"/>
</dbReference>
<dbReference type="RefSeq" id="NP_001005001.1">
    <property type="nucleotide sequence ID" value="NM_001005001.1"/>
</dbReference>
<dbReference type="SMR" id="Q6DFT6"/>
<dbReference type="FunCoup" id="Q6DFT6">
    <property type="interactions" value="600"/>
</dbReference>
<dbReference type="STRING" id="8364.ENSXETP00000053539"/>
<dbReference type="PaxDb" id="8364-ENSXETP00000053478"/>
<dbReference type="DNASU" id="448487"/>
<dbReference type="GeneID" id="448487"/>
<dbReference type="KEGG" id="xtr:448487"/>
<dbReference type="AGR" id="Xenbase:XB-GENE-949952"/>
<dbReference type="CTD" id="171546"/>
<dbReference type="Xenbase" id="XB-GENE-949952">
    <property type="gene designation" value="sptssa"/>
</dbReference>
<dbReference type="eggNOG" id="ENOG502S4Q3">
    <property type="taxonomic scope" value="Eukaryota"/>
</dbReference>
<dbReference type="InParanoid" id="Q6DFT6"/>
<dbReference type="OMA" id="LEPVERW"/>
<dbReference type="OrthoDB" id="202672at2759"/>
<dbReference type="Reactome" id="R-XTR-1660661">
    <property type="pathway name" value="Sphingolipid de novo biosynthesis"/>
</dbReference>
<dbReference type="UniPathway" id="UPA00222"/>
<dbReference type="Proteomes" id="UP000008143">
    <property type="component" value="Chromosome 8"/>
</dbReference>
<dbReference type="GO" id="GO:0005789">
    <property type="term" value="C:endoplasmic reticulum membrane"/>
    <property type="evidence" value="ECO:0007669"/>
    <property type="project" value="UniProtKB-SubCell"/>
</dbReference>
<dbReference type="GO" id="GO:0017059">
    <property type="term" value="C:serine palmitoyltransferase complex"/>
    <property type="evidence" value="ECO:0000250"/>
    <property type="project" value="UniProtKB"/>
</dbReference>
<dbReference type="GO" id="GO:0006665">
    <property type="term" value="P:sphingolipid metabolic process"/>
    <property type="evidence" value="ECO:0007669"/>
    <property type="project" value="UniProtKB-UniPathway"/>
</dbReference>
<dbReference type="InterPro" id="IPR024512">
    <property type="entry name" value="Ser_palmitoyltrfase_ssu-like"/>
</dbReference>
<dbReference type="InterPro" id="IPR051900">
    <property type="entry name" value="SPT_small_subunit"/>
</dbReference>
<dbReference type="PANTHER" id="PTHR47084">
    <property type="entry name" value="SERINE PALMITOYLTRANSFERASE SMALL SUBUNIT A"/>
    <property type="match status" value="1"/>
</dbReference>
<dbReference type="PANTHER" id="PTHR47084:SF1">
    <property type="entry name" value="SERINE PALMITOYLTRANSFERASE SMALL SUBUNIT A"/>
    <property type="match status" value="1"/>
</dbReference>
<dbReference type="Pfam" id="PF11779">
    <property type="entry name" value="SPT_ssu-like"/>
    <property type="match status" value="1"/>
</dbReference>
<evidence type="ECO:0000250" key="1">
    <source>
        <dbReference type="UniProtKB" id="Q969W0"/>
    </source>
</evidence>
<evidence type="ECO:0000255" key="2"/>
<evidence type="ECO:0000305" key="3"/>
<keyword id="KW-0256">Endoplasmic reticulum</keyword>
<keyword id="KW-0443">Lipid metabolism</keyword>
<keyword id="KW-0472">Membrane</keyword>
<keyword id="KW-1185">Reference proteome</keyword>
<keyword id="KW-0746">Sphingolipid metabolism</keyword>
<keyword id="KW-0812">Transmembrane</keyword>
<keyword id="KW-1133">Transmembrane helix</keyword>
<comment type="function">
    <text evidence="1">Component of the serine palmitoyltransferase multisubunit enzyme (SPT) that catalyzes the initial and rate-limiting step in sphingolipid biosynthesis by condensing L-serine and activated acyl-CoA (most commonly palmitoyl-CoA) to form long-chain bases. The SPT complex is composed of SPTLC1, SPTLC2 or SPTLC3 and SPTSSA or SPTSSB. Within this complex, the heterodimer consisting of SPTLC1 and SPTLC2/SPTLC3 forms the catalytic core. Within the SPT complex, SPTSSA stimulates the catalytic activity and plays a role in substrate specificity, which depends upon the overall complex composition. The SPTLC1-SPTLC2-SPTSSA complex shows a strong preference for C16-CoA substrate, while the SPTLC1-SPTLC3-SPTSSA isozyme uses both C14-CoA and C16-CoA as substrates, with a slight preference for C14-CoA. Independently of its action as a SPT component, may be involved in MBOAT7 localization to mitochondria-associated membranes, a membrane bridge between the endoplasmic reticulum and mitochondria, may hence affect MBOAT7-catalyzed incorporation of arachidonic acid into phosphatidylinositol.</text>
</comment>
<comment type="pathway">
    <text>Lipid metabolism; sphingolipid metabolism.</text>
</comment>
<comment type="subunit">
    <text evidence="1">Component of the serine palmitoyltransferase (SPT) complex, which is composed of SPTLC1, SPTLC2 or SPTLC3 and SPTSSA or SPTSSB. The heterodimer consisting of SPTLC1 and SPTLC2/SPTLC3 forms the catalytic core of the enzyme, while SPTSSA or SPTSSB subunits determine substrate specificity. SPT also interacts with ORMDL proteins, especially ORMDL3, which negatively regulate SPT activity in the presence of ceramides.</text>
</comment>
<comment type="subcellular location">
    <subcellularLocation>
        <location evidence="3">Endoplasmic reticulum membrane</location>
        <topology evidence="3">Multi-pass membrane protein</topology>
    </subcellularLocation>
</comment>
<comment type="similarity">
    <text evidence="3">Belongs to the SPTSS family. SPTSSA subfamily.</text>
</comment>
<proteinExistence type="inferred from homology"/>
<feature type="chain" id="PRO_0000293708" description="Serine palmitoyltransferase small subunit A">
    <location>
        <begin position="1"/>
        <end position="80"/>
    </location>
</feature>
<feature type="topological domain" description="Cytoplasmic" evidence="2">
    <location>
        <begin position="1"/>
        <end position="21"/>
    </location>
</feature>
<feature type="transmembrane region" description="Helical" evidence="2">
    <location>
        <begin position="22"/>
        <end position="38"/>
    </location>
</feature>
<feature type="topological domain" description="Lumenal" evidence="2">
    <location>
        <begin position="39"/>
        <end position="43"/>
    </location>
</feature>
<feature type="transmembrane region" description="Helical" evidence="2">
    <location>
        <begin position="44"/>
        <end position="66"/>
    </location>
</feature>
<feature type="topological domain" description="Cytoplasmic" evidence="2">
    <location>
        <begin position="67"/>
        <end position="80"/>
    </location>
</feature>
<feature type="site" description="Within the serine palmitoyltransferase (SPT) complex, defines the length of the acyl chain-binding pocket, determining the acyl-CoA substrate preference" evidence="1">
    <location>
        <position position="37"/>
    </location>
</feature>
<sequence length="80" mass="9496">MKVSCEDINGPRSSLSRAWNHMSWLYYQYLLVTALYMLEPWERTIFNSMLVSIVGMALYTGYIFMPQHILAILHYFEIVQ</sequence>